<gene>
    <name type="primary">psiF</name>
    <name type="ordered locus">c0491</name>
</gene>
<dbReference type="EMBL" id="AE014075">
    <property type="protein sequence ID" value="AAN78969.1"/>
    <property type="status" value="ALT_INIT"/>
    <property type="molecule type" value="Genomic_DNA"/>
</dbReference>
<dbReference type="RefSeq" id="WP_001295332.1">
    <property type="nucleotide sequence ID" value="NZ_CP051263.1"/>
</dbReference>
<dbReference type="STRING" id="199310.c0491"/>
<dbReference type="GeneID" id="93777078"/>
<dbReference type="KEGG" id="ecc:c0491"/>
<dbReference type="eggNOG" id="ENOG5032ZDU">
    <property type="taxonomic scope" value="Bacteria"/>
</dbReference>
<dbReference type="HOGENOM" id="CLU_129289_1_0_6"/>
<dbReference type="Proteomes" id="UP000001410">
    <property type="component" value="Chromosome"/>
</dbReference>
<dbReference type="InterPro" id="IPR011690">
    <property type="entry name" value="P_starv_induced_PsiF"/>
</dbReference>
<dbReference type="NCBIfam" id="NF008560">
    <property type="entry name" value="PRK11505.1"/>
    <property type="match status" value="1"/>
</dbReference>
<dbReference type="Pfam" id="PF07769">
    <property type="entry name" value="PsiF_repeat"/>
    <property type="match status" value="2"/>
</dbReference>
<protein>
    <recommendedName>
        <fullName>Phosphate starvation-inducible protein PsiF</fullName>
    </recommendedName>
</protein>
<keyword id="KW-1185">Reference proteome</keyword>
<keyword id="KW-0732">Signal</keyword>
<feature type="signal peptide" evidence="1">
    <location>
        <begin position="1"/>
        <end position="20"/>
    </location>
</feature>
<feature type="chain" id="PRO_0000045122" description="Phosphate starvation-inducible protein PsiF">
    <location>
        <begin position="21"/>
        <end position="106"/>
    </location>
</feature>
<feature type="region of interest" description="Disordered" evidence="2">
    <location>
        <begin position="58"/>
        <end position="92"/>
    </location>
</feature>
<feature type="compositionally biased region" description="Polar residues" evidence="2">
    <location>
        <begin position="70"/>
        <end position="89"/>
    </location>
</feature>
<evidence type="ECO:0000255" key="1"/>
<evidence type="ECO:0000256" key="2">
    <source>
        <dbReference type="SAM" id="MobiDB-lite"/>
    </source>
</evidence>
<evidence type="ECO:0000305" key="3"/>
<accession>P0AFM5</accession>
<accession>P27295</accession>
<reference key="1">
    <citation type="journal article" date="2002" name="Proc. Natl. Acad. Sci. U.S.A.">
        <title>Extensive mosaic structure revealed by the complete genome sequence of uropathogenic Escherichia coli.</title>
        <authorList>
            <person name="Welch R.A."/>
            <person name="Burland V."/>
            <person name="Plunkett G. III"/>
            <person name="Redford P."/>
            <person name="Roesch P."/>
            <person name="Rasko D."/>
            <person name="Buckles E.L."/>
            <person name="Liou S.-R."/>
            <person name="Boutin A."/>
            <person name="Hackett J."/>
            <person name="Stroud D."/>
            <person name="Mayhew G.F."/>
            <person name="Rose D.J."/>
            <person name="Zhou S."/>
            <person name="Schwartz D.C."/>
            <person name="Perna N.T."/>
            <person name="Mobley H.L.T."/>
            <person name="Donnenberg M.S."/>
            <person name="Blattner F.R."/>
        </authorList>
    </citation>
    <scope>NUCLEOTIDE SEQUENCE [LARGE SCALE GENOMIC DNA]</scope>
    <source>
        <strain>CFT073 / ATCC 700928 / UPEC</strain>
    </source>
</reference>
<proteinExistence type="inferred from homology"/>
<comment type="sequence caution" evidence="3">
    <conflict type="erroneous initiation">
        <sequence resource="EMBL-CDS" id="AAN78969"/>
    </conflict>
</comment>
<organism>
    <name type="scientific">Escherichia coli O6:H1 (strain CFT073 / ATCC 700928 / UPEC)</name>
    <dbReference type="NCBI Taxonomy" id="199310"/>
    <lineage>
        <taxon>Bacteria</taxon>
        <taxon>Pseudomonadati</taxon>
        <taxon>Pseudomonadota</taxon>
        <taxon>Gammaproteobacteria</taxon>
        <taxon>Enterobacterales</taxon>
        <taxon>Enterobacteriaceae</taxon>
        <taxon>Escherichia</taxon>
    </lineage>
</organism>
<sequence length="106" mass="11687">MKITLLVTLLFGLVFLTTVGAAERTLTPQQQRMTSCNQQATAQALKGDARKTYMSDCLKNSKSAPGEKSLTPQQQKMRECNNQATQQSLKGDDRNKFMSACLKKAA</sequence>
<name>PSIF_ECOL6</name>